<sequence>MTVTVSQVLRPRGPQIERLTENRAKVVLEPLGRGYAHTLGNALRRVLLSSIPGFAITEVEIDGVLHEYTTVEGLQEDVLEVLLNLKDVAIRIHSGDTATLSLFKQGAGVVTAADIKTDHNVEIINDGHVICHLTKDTTINMRLKIERGFGYQPAVVRRRPDDENRTIGRLILDASFSPVRRVAYVVEAARVEQRTDLDKLIIDIETNGTIDAEEALRTAADILTDQLSVFGDFTHRDRGTVKPASSGVDPVLLRPIDDLELTVRSANCLKAESIYYIGDLIQKTEVELLKTPNLGKKSLTEIKEVLGQRGLGLGVKLENWPPPGVSQYGMLG</sequence>
<accession>P66713</accession>
<accession>Q9PE52</accession>
<organism>
    <name type="scientific">Xylella fastidiosa (strain Temecula1 / ATCC 700964)</name>
    <dbReference type="NCBI Taxonomy" id="183190"/>
    <lineage>
        <taxon>Bacteria</taxon>
        <taxon>Pseudomonadati</taxon>
        <taxon>Pseudomonadota</taxon>
        <taxon>Gammaproteobacteria</taxon>
        <taxon>Lysobacterales</taxon>
        <taxon>Lysobacteraceae</taxon>
        <taxon>Xylella</taxon>
    </lineage>
</organism>
<proteinExistence type="inferred from homology"/>
<reference key="1">
    <citation type="journal article" date="2003" name="J. Bacteriol.">
        <title>Comparative analyses of the complete genome sequences of Pierce's disease and citrus variegated chlorosis strains of Xylella fastidiosa.</title>
        <authorList>
            <person name="Van Sluys M.A."/>
            <person name="de Oliveira M.C."/>
            <person name="Monteiro-Vitorello C.B."/>
            <person name="Miyaki C.Y."/>
            <person name="Furlan L.R."/>
            <person name="Camargo L.E.A."/>
            <person name="da Silva A.C.R."/>
            <person name="Moon D.H."/>
            <person name="Takita M.A."/>
            <person name="Lemos E.G.M."/>
            <person name="Machado M.A."/>
            <person name="Ferro M.I.T."/>
            <person name="da Silva F.R."/>
            <person name="Goldman M.H.S."/>
            <person name="Goldman G.H."/>
            <person name="Lemos M.V.F."/>
            <person name="El-Dorry H."/>
            <person name="Tsai S.M."/>
            <person name="Carrer H."/>
            <person name="Carraro D.M."/>
            <person name="de Oliveira R.C."/>
            <person name="Nunes L.R."/>
            <person name="Siqueira W.J."/>
            <person name="Coutinho L.L."/>
            <person name="Kimura E.T."/>
            <person name="Ferro E.S."/>
            <person name="Harakava R."/>
            <person name="Kuramae E.E."/>
            <person name="Marino C.L."/>
            <person name="Giglioti E."/>
            <person name="Abreu I.L."/>
            <person name="Alves L.M.C."/>
            <person name="do Amaral A.M."/>
            <person name="Baia G.S."/>
            <person name="Blanco S.R."/>
            <person name="Brito M.S."/>
            <person name="Cannavan F.S."/>
            <person name="Celestino A.V."/>
            <person name="da Cunha A.F."/>
            <person name="Fenille R.C."/>
            <person name="Ferro J.A."/>
            <person name="Formighieri E.F."/>
            <person name="Kishi L.T."/>
            <person name="Leoni S.G."/>
            <person name="Oliveira A.R."/>
            <person name="Rosa V.E. Jr."/>
            <person name="Sassaki F.T."/>
            <person name="Sena J.A.D."/>
            <person name="de Souza A.A."/>
            <person name="Truffi D."/>
            <person name="Tsukumo F."/>
            <person name="Yanai G.M."/>
            <person name="Zaros L.G."/>
            <person name="Civerolo E.L."/>
            <person name="Simpson A.J.G."/>
            <person name="Almeida N.F. Jr."/>
            <person name="Setubal J.C."/>
            <person name="Kitajima J.P."/>
        </authorList>
    </citation>
    <scope>NUCLEOTIDE SEQUENCE [LARGE SCALE GENOMIC DNA]</scope>
    <source>
        <strain>Temecula1 / ATCC 700964</strain>
    </source>
</reference>
<dbReference type="EC" id="2.7.7.6" evidence="1"/>
<dbReference type="EMBL" id="AE009442">
    <property type="protein sequence ID" value="AAO28340.1"/>
    <property type="molecule type" value="Genomic_DNA"/>
</dbReference>
<dbReference type="RefSeq" id="WP_004090142.1">
    <property type="nucleotide sequence ID" value="NC_004556.1"/>
</dbReference>
<dbReference type="SMR" id="P66713"/>
<dbReference type="GeneID" id="93904163"/>
<dbReference type="KEGG" id="xft:PD_0461"/>
<dbReference type="HOGENOM" id="CLU_053084_0_0_6"/>
<dbReference type="Proteomes" id="UP000002516">
    <property type="component" value="Chromosome"/>
</dbReference>
<dbReference type="GO" id="GO:0005737">
    <property type="term" value="C:cytoplasm"/>
    <property type="evidence" value="ECO:0007669"/>
    <property type="project" value="UniProtKB-ARBA"/>
</dbReference>
<dbReference type="GO" id="GO:0000428">
    <property type="term" value="C:DNA-directed RNA polymerase complex"/>
    <property type="evidence" value="ECO:0007669"/>
    <property type="project" value="UniProtKB-KW"/>
</dbReference>
<dbReference type="GO" id="GO:0003677">
    <property type="term" value="F:DNA binding"/>
    <property type="evidence" value="ECO:0007669"/>
    <property type="project" value="UniProtKB-UniRule"/>
</dbReference>
<dbReference type="GO" id="GO:0003899">
    <property type="term" value="F:DNA-directed RNA polymerase activity"/>
    <property type="evidence" value="ECO:0007669"/>
    <property type="project" value="UniProtKB-UniRule"/>
</dbReference>
<dbReference type="GO" id="GO:0046983">
    <property type="term" value="F:protein dimerization activity"/>
    <property type="evidence" value="ECO:0007669"/>
    <property type="project" value="InterPro"/>
</dbReference>
<dbReference type="GO" id="GO:0006351">
    <property type="term" value="P:DNA-templated transcription"/>
    <property type="evidence" value="ECO:0007669"/>
    <property type="project" value="UniProtKB-UniRule"/>
</dbReference>
<dbReference type="CDD" id="cd06928">
    <property type="entry name" value="RNAP_alpha_NTD"/>
    <property type="match status" value="1"/>
</dbReference>
<dbReference type="FunFam" id="1.10.150.20:FF:000001">
    <property type="entry name" value="DNA-directed RNA polymerase subunit alpha"/>
    <property type="match status" value="1"/>
</dbReference>
<dbReference type="FunFam" id="2.170.120.12:FF:000001">
    <property type="entry name" value="DNA-directed RNA polymerase subunit alpha"/>
    <property type="match status" value="1"/>
</dbReference>
<dbReference type="Gene3D" id="1.10.150.20">
    <property type="entry name" value="5' to 3' exonuclease, C-terminal subdomain"/>
    <property type="match status" value="1"/>
</dbReference>
<dbReference type="Gene3D" id="2.170.120.12">
    <property type="entry name" value="DNA-directed RNA polymerase, insert domain"/>
    <property type="match status" value="1"/>
</dbReference>
<dbReference type="Gene3D" id="3.30.1360.10">
    <property type="entry name" value="RNA polymerase, RBP11-like subunit"/>
    <property type="match status" value="1"/>
</dbReference>
<dbReference type="HAMAP" id="MF_00059">
    <property type="entry name" value="RNApol_bact_RpoA"/>
    <property type="match status" value="1"/>
</dbReference>
<dbReference type="InterPro" id="IPR011262">
    <property type="entry name" value="DNA-dir_RNA_pol_insert"/>
</dbReference>
<dbReference type="InterPro" id="IPR011263">
    <property type="entry name" value="DNA-dir_RNA_pol_RpoA/D/Rpb3"/>
</dbReference>
<dbReference type="InterPro" id="IPR011773">
    <property type="entry name" value="DNA-dir_RpoA"/>
</dbReference>
<dbReference type="InterPro" id="IPR036603">
    <property type="entry name" value="RBP11-like"/>
</dbReference>
<dbReference type="InterPro" id="IPR011260">
    <property type="entry name" value="RNAP_asu_C"/>
</dbReference>
<dbReference type="InterPro" id="IPR036643">
    <property type="entry name" value="RNApol_insert_sf"/>
</dbReference>
<dbReference type="NCBIfam" id="NF003513">
    <property type="entry name" value="PRK05182.1-2"/>
    <property type="match status" value="1"/>
</dbReference>
<dbReference type="NCBIfam" id="NF003519">
    <property type="entry name" value="PRK05182.2-5"/>
    <property type="match status" value="1"/>
</dbReference>
<dbReference type="NCBIfam" id="TIGR02027">
    <property type="entry name" value="rpoA"/>
    <property type="match status" value="1"/>
</dbReference>
<dbReference type="Pfam" id="PF01000">
    <property type="entry name" value="RNA_pol_A_bac"/>
    <property type="match status" value="1"/>
</dbReference>
<dbReference type="Pfam" id="PF03118">
    <property type="entry name" value="RNA_pol_A_CTD"/>
    <property type="match status" value="1"/>
</dbReference>
<dbReference type="Pfam" id="PF01193">
    <property type="entry name" value="RNA_pol_L"/>
    <property type="match status" value="1"/>
</dbReference>
<dbReference type="SMART" id="SM00662">
    <property type="entry name" value="RPOLD"/>
    <property type="match status" value="1"/>
</dbReference>
<dbReference type="SUPFAM" id="SSF47789">
    <property type="entry name" value="C-terminal domain of RNA polymerase alpha subunit"/>
    <property type="match status" value="1"/>
</dbReference>
<dbReference type="SUPFAM" id="SSF56553">
    <property type="entry name" value="Insert subdomain of RNA polymerase alpha subunit"/>
    <property type="match status" value="1"/>
</dbReference>
<dbReference type="SUPFAM" id="SSF55257">
    <property type="entry name" value="RBP11-like subunits of RNA polymerase"/>
    <property type="match status" value="1"/>
</dbReference>
<name>RPOA_XYLFT</name>
<protein>
    <recommendedName>
        <fullName evidence="1">DNA-directed RNA polymerase subunit alpha</fullName>
        <shortName evidence="1">RNAP subunit alpha</shortName>
        <ecNumber evidence="1">2.7.7.6</ecNumber>
    </recommendedName>
    <alternativeName>
        <fullName evidence="1">RNA polymerase subunit alpha</fullName>
    </alternativeName>
    <alternativeName>
        <fullName evidence="1">Transcriptase subunit alpha</fullName>
    </alternativeName>
</protein>
<keyword id="KW-0240">DNA-directed RNA polymerase</keyword>
<keyword id="KW-0548">Nucleotidyltransferase</keyword>
<keyword id="KW-1185">Reference proteome</keyword>
<keyword id="KW-0804">Transcription</keyword>
<keyword id="KW-0808">Transferase</keyword>
<gene>
    <name evidence="1" type="primary">rpoA</name>
    <name type="ordered locus">PD_0461</name>
</gene>
<comment type="function">
    <text>DNA-dependent RNA polymerase catalyzes the transcription of DNA into RNA using the four ribonucleoside triphosphates as substrates.</text>
</comment>
<comment type="catalytic activity">
    <reaction evidence="1">
        <text>RNA(n) + a ribonucleoside 5'-triphosphate = RNA(n+1) + diphosphate</text>
        <dbReference type="Rhea" id="RHEA:21248"/>
        <dbReference type="Rhea" id="RHEA-COMP:14527"/>
        <dbReference type="Rhea" id="RHEA-COMP:17342"/>
        <dbReference type="ChEBI" id="CHEBI:33019"/>
        <dbReference type="ChEBI" id="CHEBI:61557"/>
        <dbReference type="ChEBI" id="CHEBI:140395"/>
        <dbReference type="EC" id="2.7.7.6"/>
    </reaction>
</comment>
<comment type="subunit">
    <text evidence="1">Homodimer. The RNAP catalytic core consists of 2 alpha, 1 beta, 1 beta' and 1 omega subunit. When a sigma factor is associated with the core the holoenzyme is formed, which can initiate transcription.</text>
</comment>
<comment type="domain">
    <text evidence="1">The N-terminal domain is essential for RNAP assembly and basal transcription, whereas the C-terminal domain is involved in interaction with transcriptional regulators and with upstream promoter elements.</text>
</comment>
<comment type="similarity">
    <text evidence="1">Belongs to the RNA polymerase alpha chain family.</text>
</comment>
<feature type="chain" id="PRO_0000175426" description="DNA-directed RNA polymerase subunit alpha">
    <location>
        <begin position="1"/>
        <end position="332"/>
    </location>
</feature>
<feature type="region of interest" description="Alpha N-terminal domain (alpha-NTD)" evidence="1">
    <location>
        <begin position="1"/>
        <end position="234"/>
    </location>
</feature>
<feature type="region of interest" description="Alpha C-terminal domain (alpha-CTD)" evidence="1">
    <location>
        <begin position="248"/>
        <end position="332"/>
    </location>
</feature>
<evidence type="ECO:0000255" key="1">
    <source>
        <dbReference type="HAMAP-Rule" id="MF_00059"/>
    </source>
</evidence>